<organism>
    <name type="scientific">Xanthomonas oryzae pv. oryzae (strain PXO99A)</name>
    <dbReference type="NCBI Taxonomy" id="360094"/>
    <lineage>
        <taxon>Bacteria</taxon>
        <taxon>Pseudomonadati</taxon>
        <taxon>Pseudomonadota</taxon>
        <taxon>Gammaproteobacteria</taxon>
        <taxon>Lysobacterales</taxon>
        <taxon>Lysobacteraceae</taxon>
        <taxon>Xanthomonas</taxon>
    </lineage>
</organism>
<sequence>MRNWRWLLLVLAVLLAWLQYRFWFGPGNSGEVMMLEAQVAHQTQDNEGLRQRNQALAAEVKDLKDGEAAIEERARSELGMIKPGETFYRVVEDAPLPAPASPETAAPAQQAPASTDPVDHP</sequence>
<accession>B2SUA7</accession>
<feature type="chain" id="PRO_1000129950" description="Cell division protein FtsB">
    <location>
        <begin position="1"/>
        <end position="121"/>
    </location>
</feature>
<feature type="topological domain" description="Cytoplasmic" evidence="1">
    <location>
        <begin position="1"/>
        <end position="6"/>
    </location>
</feature>
<feature type="transmembrane region" description="Helical" evidence="1">
    <location>
        <begin position="7"/>
        <end position="24"/>
    </location>
</feature>
<feature type="topological domain" description="Periplasmic" evidence="1">
    <location>
        <begin position="25"/>
        <end position="121"/>
    </location>
</feature>
<feature type="region of interest" description="Disordered" evidence="2">
    <location>
        <begin position="94"/>
        <end position="121"/>
    </location>
</feature>
<feature type="coiled-coil region" evidence="1">
    <location>
        <begin position="31"/>
        <end position="66"/>
    </location>
</feature>
<feature type="compositionally biased region" description="Low complexity" evidence="2">
    <location>
        <begin position="101"/>
        <end position="121"/>
    </location>
</feature>
<reference key="1">
    <citation type="journal article" date="2008" name="BMC Genomics">
        <title>Genome sequence and rapid evolution of the rice pathogen Xanthomonas oryzae pv. oryzae PXO99A.</title>
        <authorList>
            <person name="Salzberg S.L."/>
            <person name="Sommer D.D."/>
            <person name="Schatz M.C."/>
            <person name="Phillippy A.M."/>
            <person name="Rabinowicz P.D."/>
            <person name="Tsuge S."/>
            <person name="Furutani A."/>
            <person name="Ochiai H."/>
            <person name="Delcher A.L."/>
            <person name="Kelley D."/>
            <person name="Madupu R."/>
            <person name="Puiu D."/>
            <person name="Radune D."/>
            <person name="Shumway M."/>
            <person name="Trapnell C."/>
            <person name="Aparna G."/>
            <person name="Jha G."/>
            <person name="Pandey A."/>
            <person name="Patil P.B."/>
            <person name="Ishihara H."/>
            <person name="Meyer D.F."/>
            <person name="Szurek B."/>
            <person name="Verdier V."/>
            <person name="Koebnik R."/>
            <person name="Dow J.M."/>
            <person name="Ryan R.P."/>
            <person name="Hirata H."/>
            <person name="Tsuyumu S."/>
            <person name="Won Lee S."/>
            <person name="Seo Y.-S."/>
            <person name="Sriariyanum M."/>
            <person name="Ronald P.C."/>
            <person name="Sonti R.V."/>
            <person name="Van Sluys M.-A."/>
            <person name="Leach J.E."/>
            <person name="White F.F."/>
            <person name="Bogdanove A.J."/>
        </authorList>
    </citation>
    <scope>NUCLEOTIDE SEQUENCE [LARGE SCALE GENOMIC DNA]</scope>
    <source>
        <strain>PXO99A</strain>
    </source>
</reference>
<evidence type="ECO:0000255" key="1">
    <source>
        <dbReference type="HAMAP-Rule" id="MF_00599"/>
    </source>
</evidence>
<evidence type="ECO:0000256" key="2">
    <source>
        <dbReference type="SAM" id="MobiDB-lite"/>
    </source>
</evidence>
<dbReference type="EMBL" id="CP000967">
    <property type="protein sequence ID" value="ACD58297.1"/>
    <property type="molecule type" value="Genomic_DNA"/>
</dbReference>
<dbReference type="RefSeq" id="WP_011259528.1">
    <property type="nucleotide sequence ID" value="NC_010717.2"/>
</dbReference>
<dbReference type="SMR" id="B2SUA7"/>
<dbReference type="KEGG" id="xop:PXO_00170"/>
<dbReference type="eggNOG" id="COG2919">
    <property type="taxonomic scope" value="Bacteria"/>
</dbReference>
<dbReference type="HOGENOM" id="CLU_134863_5_0_6"/>
<dbReference type="Proteomes" id="UP000001740">
    <property type="component" value="Chromosome"/>
</dbReference>
<dbReference type="GO" id="GO:0032153">
    <property type="term" value="C:cell division site"/>
    <property type="evidence" value="ECO:0007669"/>
    <property type="project" value="UniProtKB-UniRule"/>
</dbReference>
<dbReference type="GO" id="GO:0030428">
    <property type="term" value="C:cell septum"/>
    <property type="evidence" value="ECO:0007669"/>
    <property type="project" value="TreeGrafter"/>
</dbReference>
<dbReference type="GO" id="GO:0005886">
    <property type="term" value="C:plasma membrane"/>
    <property type="evidence" value="ECO:0007669"/>
    <property type="project" value="UniProtKB-SubCell"/>
</dbReference>
<dbReference type="GO" id="GO:0043093">
    <property type="term" value="P:FtsZ-dependent cytokinesis"/>
    <property type="evidence" value="ECO:0007669"/>
    <property type="project" value="UniProtKB-UniRule"/>
</dbReference>
<dbReference type="HAMAP" id="MF_00599">
    <property type="entry name" value="FtsB"/>
    <property type="match status" value="1"/>
</dbReference>
<dbReference type="InterPro" id="IPR023081">
    <property type="entry name" value="Cell_div_FtsB"/>
</dbReference>
<dbReference type="InterPro" id="IPR007060">
    <property type="entry name" value="FtsL/DivIC"/>
</dbReference>
<dbReference type="NCBIfam" id="NF002058">
    <property type="entry name" value="PRK00888.1"/>
    <property type="match status" value="1"/>
</dbReference>
<dbReference type="PANTHER" id="PTHR37485">
    <property type="entry name" value="CELL DIVISION PROTEIN FTSB"/>
    <property type="match status" value="1"/>
</dbReference>
<dbReference type="PANTHER" id="PTHR37485:SF1">
    <property type="entry name" value="CELL DIVISION PROTEIN FTSB"/>
    <property type="match status" value="1"/>
</dbReference>
<dbReference type="Pfam" id="PF04977">
    <property type="entry name" value="DivIC"/>
    <property type="match status" value="1"/>
</dbReference>
<keyword id="KW-0131">Cell cycle</keyword>
<keyword id="KW-0132">Cell division</keyword>
<keyword id="KW-0997">Cell inner membrane</keyword>
<keyword id="KW-1003">Cell membrane</keyword>
<keyword id="KW-0175">Coiled coil</keyword>
<keyword id="KW-0472">Membrane</keyword>
<keyword id="KW-0812">Transmembrane</keyword>
<keyword id="KW-1133">Transmembrane helix</keyword>
<comment type="function">
    <text evidence="1">Essential cell division protein. May link together the upstream cell division proteins, which are predominantly cytoplasmic, with the downstream cell division proteins, which are predominantly periplasmic.</text>
</comment>
<comment type="subunit">
    <text evidence="1">Part of a complex composed of FtsB, FtsL and FtsQ.</text>
</comment>
<comment type="subcellular location">
    <subcellularLocation>
        <location evidence="1">Cell inner membrane</location>
        <topology evidence="1">Single-pass type II membrane protein</topology>
    </subcellularLocation>
    <text evidence="1">Localizes to the division septum.</text>
</comment>
<comment type="similarity">
    <text evidence="1">Belongs to the FtsB family.</text>
</comment>
<proteinExistence type="inferred from homology"/>
<protein>
    <recommendedName>
        <fullName evidence="1">Cell division protein FtsB</fullName>
    </recommendedName>
</protein>
<gene>
    <name evidence="1" type="primary">ftsB</name>
    <name type="ordered locus">PXO_00170</name>
</gene>
<name>FTSB_XANOP</name>